<protein>
    <recommendedName>
        <fullName>U1-lycotoxin-Ls1i</fullName>
    </recommendedName>
    <alternativeName>
        <fullName>Toxin-like structure LSTX-A21</fullName>
    </alternativeName>
</protein>
<organism>
    <name type="scientific">Lycosa singoriensis</name>
    <name type="common">Wolf spider</name>
    <name type="synonym">Aranea singoriensis</name>
    <dbReference type="NCBI Taxonomy" id="434756"/>
    <lineage>
        <taxon>Eukaryota</taxon>
        <taxon>Metazoa</taxon>
        <taxon>Ecdysozoa</taxon>
        <taxon>Arthropoda</taxon>
        <taxon>Chelicerata</taxon>
        <taxon>Arachnida</taxon>
        <taxon>Araneae</taxon>
        <taxon>Araneomorphae</taxon>
        <taxon>Entelegynae</taxon>
        <taxon>Lycosoidea</taxon>
        <taxon>Lycosidae</taxon>
        <taxon>Lycosa</taxon>
    </lineage>
</organism>
<sequence>MMKVLVVVALLVTLISYSSSEGIDDLEADELLSLMANEQTRKECISKHHECTSNKHGCCRGNFFKYKCQCTTVVTQDGEQTERCFCGTPPHHKAAELVVGFGKKIFG</sequence>
<dbReference type="EMBL" id="EU925944">
    <property type="protein sequence ID" value="ACI41276.1"/>
    <property type="molecule type" value="mRNA"/>
</dbReference>
<dbReference type="EMBL" id="FM863948">
    <property type="protein sequence ID" value="CAS03546.1"/>
    <property type="molecule type" value="mRNA"/>
</dbReference>
<dbReference type="SMR" id="B6DCL0"/>
<dbReference type="ArachnoServer" id="AS000893">
    <property type="toxin name" value="U1-lycotoxin-Ls1i"/>
</dbReference>
<dbReference type="GO" id="GO:0005576">
    <property type="term" value="C:extracellular region"/>
    <property type="evidence" value="ECO:0007669"/>
    <property type="project" value="UniProtKB-SubCell"/>
</dbReference>
<dbReference type="GO" id="GO:0090729">
    <property type="term" value="F:toxin activity"/>
    <property type="evidence" value="ECO:0007669"/>
    <property type="project" value="UniProtKB-KW"/>
</dbReference>
<dbReference type="InterPro" id="IPR019553">
    <property type="entry name" value="Spider_toxin_CSTX_knottin"/>
</dbReference>
<dbReference type="InterPro" id="IPR011142">
    <property type="entry name" value="Spider_toxin_CSTX_Knottin_CS"/>
</dbReference>
<dbReference type="Pfam" id="PF10530">
    <property type="entry name" value="Toxin_35"/>
    <property type="match status" value="1"/>
</dbReference>
<dbReference type="PROSITE" id="PS60029">
    <property type="entry name" value="SPIDER_CSTX"/>
    <property type="match status" value="1"/>
</dbReference>
<feature type="signal peptide" evidence="2">
    <location>
        <begin position="1"/>
        <end position="20"/>
    </location>
</feature>
<feature type="propeptide" id="PRO_0000401537" evidence="1">
    <location>
        <begin position="21"/>
        <end position="41"/>
    </location>
</feature>
<feature type="chain" id="PRO_0000401538" description="U1-lycotoxin-Ls1i">
    <location>
        <begin position="42"/>
        <end position="107"/>
    </location>
</feature>
<feature type="disulfide bond" evidence="1">
    <location>
        <begin position="44"/>
        <end position="59"/>
    </location>
</feature>
<feature type="disulfide bond" evidence="1">
    <location>
        <begin position="51"/>
        <end position="68"/>
    </location>
</feature>
<feature type="disulfide bond" evidence="1">
    <location>
        <begin position="58"/>
        <end position="86"/>
    </location>
</feature>
<feature type="disulfide bond" evidence="1">
    <location>
        <begin position="70"/>
        <end position="84"/>
    </location>
</feature>
<proteinExistence type="evidence at transcript level"/>
<keyword id="KW-1015">Disulfide bond</keyword>
<keyword id="KW-0960">Knottin</keyword>
<keyword id="KW-0964">Secreted</keyword>
<keyword id="KW-0732">Signal</keyword>
<keyword id="KW-0800">Toxin</keyword>
<accession>B6DCL0</accession>
<evidence type="ECO:0000250" key="1"/>
<evidence type="ECO:0000255" key="2"/>
<evidence type="ECO:0000305" key="3"/>
<comment type="subcellular location">
    <subcellularLocation>
        <location evidence="1">Secreted</location>
    </subcellularLocation>
</comment>
<comment type="tissue specificity">
    <text>Expressed by the venom gland.</text>
</comment>
<comment type="domain">
    <text evidence="1">The presence of a 'disulfide through disulfide knot' structurally defines this protein as a knottin.</text>
</comment>
<comment type="similarity">
    <text evidence="3">Belongs to the neurotoxin 19 (CSTX) family. 04 (U1-Lctx) subfamily.</text>
</comment>
<name>TX121_LYCSI</name>
<reference key="1">
    <citation type="journal article" date="2010" name="Zoology">
        <title>Transcriptome analysis of the venom glands of the Chinese wolf spider Lycosa singoriensis.</title>
        <authorList>
            <person name="Zhang Y."/>
            <person name="Chen J."/>
            <person name="Tang X."/>
            <person name="Wang F."/>
            <person name="Jiang L."/>
            <person name="Xiong X."/>
            <person name="Wang M."/>
            <person name="Rong M."/>
            <person name="Liu Z."/>
            <person name="Liang S."/>
        </authorList>
    </citation>
    <scope>NUCLEOTIDE SEQUENCE [LARGE SCALE MRNA]</scope>
    <source>
        <tissue>Venom gland</tissue>
    </source>
</reference>